<organism>
    <name type="scientific">Takifugu rubripes</name>
    <name type="common">Japanese pufferfish</name>
    <name type="synonym">Fugu rubripes</name>
    <dbReference type="NCBI Taxonomy" id="31033"/>
    <lineage>
        <taxon>Eukaryota</taxon>
        <taxon>Metazoa</taxon>
        <taxon>Chordata</taxon>
        <taxon>Craniata</taxon>
        <taxon>Vertebrata</taxon>
        <taxon>Euteleostomi</taxon>
        <taxon>Actinopterygii</taxon>
        <taxon>Neopterygii</taxon>
        <taxon>Teleostei</taxon>
        <taxon>Neoteleostei</taxon>
        <taxon>Acanthomorphata</taxon>
        <taxon>Eupercaria</taxon>
        <taxon>Tetraodontiformes</taxon>
        <taxon>Tetradontoidea</taxon>
        <taxon>Tetraodontidae</taxon>
        <taxon>Takifugu</taxon>
    </lineage>
</organism>
<protein>
    <recommendedName>
        <fullName>Actin, alpha anomalous</fullName>
        <ecNumber evidence="2">3.6.4.-</ecNumber>
    </recommendedName>
</protein>
<dbReference type="EC" id="3.6.4.-" evidence="2"/>
<dbReference type="EMBL" id="U38962">
    <property type="protein sequence ID" value="AAC59897.1"/>
    <property type="molecule type" value="Genomic_DNA"/>
</dbReference>
<dbReference type="PIR" id="S71123">
    <property type="entry name" value="S71123"/>
</dbReference>
<dbReference type="RefSeq" id="XP_011617599.1">
    <property type="nucleotide sequence ID" value="XM_011619297.2"/>
</dbReference>
<dbReference type="SMR" id="P53483"/>
<dbReference type="STRING" id="31033.ENSTRUP00000080448"/>
<dbReference type="GeneID" id="101074318"/>
<dbReference type="KEGG" id="tru:101074318"/>
<dbReference type="eggNOG" id="KOG0676">
    <property type="taxonomic scope" value="Eukaryota"/>
</dbReference>
<dbReference type="HOGENOM" id="CLU_027965_0_2_1"/>
<dbReference type="InParanoid" id="P53483"/>
<dbReference type="OrthoDB" id="6953074at2759"/>
<dbReference type="TreeFam" id="TF354237"/>
<dbReference type="Proteomes" id="UP000005226">
    <property type="component" value="Unplaced"/>
</dbReference>
<dbReference type="GO" id="GO:0005737">
    <property type="term" value="C:cytoplasm"/>
    <property type="evidence" value="ECO:0007669"/>
    <property type="project" value="UniProtKB-KW"/>
</dbReference>
<dbReference type="GO" id="GO:0005856">
    <property type="term" value="C:cytoskeleton"/>
    <property type="evidence" value="ECO:0007669"/>
    <property type="project" value="UniProtKB-SubCell"/>
</dbReference>
<dbReference type="GO" id="GO:0005524">
    <property type="term" value="F:ATP binding"/>
    <property type="evidence" value="ECO:0007669"/>
    <property type="project" value="UniProtKB-KW"/>
</dbReference>
<dbReference type="GO" id="GO:0016787">
    <property type="term" value="F:hydrolase activity"/>
    <property type="evidence" value="ECO:0007669"/>
    <property type="project" value="UniProtKB-KW"/>
</dbReference>
<dbReference type="CDD" id="cd10224">
    <property type="entry name" value="ASKHA_NBD_actin"/>
    <property type="match status" value="1"/>
</dbReference>
<dbReference type="FunFam" id="3.30.420.40:FF:000291">
    <property type="entry name" value="Actin, alpha skeletal muscle"/>
    <property type="match status" value="1"/>
</dbReference>
<dbReference type="FunFam" id="3.90.640.10:FF:000047">
    <property type="entry name" value="Actin, alpha skeletal muscle"/>
    <property type="match status" value="1"/>
</dbReference>
<dbReference type="FunFam" id="3.30.420.40:FF:000404">
    <property type="entry name" value="Major actin"/>
    <property type="match status" value="1"/>
</dbReference>
<dbReference type="FunFam" id="3.30.420.40:FF:000058">
    <property type="entry name" value="Putative actin-related protein 5"/>
    <property type="match status" value="1"/>
</dbReference>
<dbReference type="Gene3D" id="3.30.420.40">
    <property type="match status" value="2"/>
</dbReference>
<dbReference type="Gene3D" id="3.90.640.10">
    <property type="entry name" value="Actin, Chain A, domain 4"/>
    <property type="match status" value="1"/>
</dbReference>
<dbReference type="InterPro" id="IPR004000">
    <property type="entry name" value="Actin"/>
</dbReference>
<dbReference type="InterPro" id="IPR020902">
    <property type="entry name" value="Actin/actin-like_CS"/>
</dbReference>
<dbReference type="InterPro" id="IPR004001">
    <property type="entry name" value="Actin_CS"/>
</dbReference>
<dbReference type="InterPro" id="IPR043129">
    <property type="entry name" value="ATPase_NBD"/>
</dbReference>
<dbReference type="PANTHER" id="PTHR11937">
    <property type="entry name" value="ACTIN"/>
    <property type="match status" value="1"/>
</dbReference>
<dbReference type="Pfam" id="PF00022">
    <property type="entry name" value="Actin"/>
    <property type="match status" value="1"/>
</dbReference>
<dbReference type="PRINTS" id="PR00190">
    <property type="entry name" value="ACTIN"/>
</dbReference>
<dbReference type="SMART" id="SM00268">
    <property type="entry name" value="ACTIN"/>
    <property type="match status" value="1"/>
</dbReference>
<dbReference type="SUPFAM" id="SSF53067">
    <property type="entry name" value="Actin-like ATPase domain"/>
    <property type="match status" value="2"/>
</dbReference>
<dbReference type="PROSITE" id="PS00406">
    <property type="entry name" value="ACTINS_1"/>
    <property type="match status" value="1"/>
</dbReference>
<dbReference type="PROSITE" id="PS00432">
    <property type="entry name" value="ACTINS_2"/>
    <property type="match status" value="1"/>
</dbReference>
<dbReference type="PROSITE" id="PS01132">
    <property type="entry name" value="ACTINS_ACT_LIKE"/>
    <property type="match status" value="1"/>
</dbReference>
<reference key="1">
    <citation type="journal article" date="1996" name="J. Mol. Biol.">
        <title>Isolation, characterization and evolution of nine pufferfish (Fugu rubripes) actin genes.</title>
        <authorList>
            <person name="Venkatesh B."/>
            <person name="Tay B.H."/>
            <person name="Elgar G."/>
            <person name="Brenner S."/>
        </authorList>
    </citation>
    <scope>NUCLEOTIDE SEQUENCE [GENOMIC DNA]</scope>
    <scope>TISSUE SPECIFICITY</scope>
</reference>
<feature type="chain" id="PRO_0000089056" description="Actin, alpha anomalous">
    <location>
        <begin position="1"/>
        <end position="376"/>
    </location>
</feature>
<feature type="modified residue" description="Methionine (R)-sulfoxide" evidence="1">
    <location>
        <position position="45"/>
    </location>
</feature>
<feature type="modified residue" description="Methionine (R)-sulfoxide" evidence="1">
    <location>
        <position position="48"/>
    </location>
</feature>
<name>ACTX_TAKRU</name>
<keyword id="KW-0067">ATP-binding</keyword>
<keyword id="KW-0963">Cytoplasm</keyword>
<keyword id="KW-0206">Cytoskeleton</keyword>
<keyword id="KW-0378">Hydrolase</keyword>
<keyword id="KW-0547">Nucleotide-binding</keyword>
<keyword id="KW-0558">Oxidation</keyword>
<keyword id="KW-1185">Reference proteome</keyword>
<sequence length="376" mass="41979">MSDYDETALVCDNGSGLVKAGFAGDDTPRAVFHAIVGRPRHQDDMDDMGKKGYYVGDEAQSKRDILSLKHPIERGIITNWDDMEKIWHHTFYNELCVAPEEHPTLLTEAPLNPKANREKMTQIMLETFNMPAMYVSIQAVLSLYASGRTTGIVLDSGEGVTHAVPIAEGYALPPAIMRLNLAGRDLTDYLMKILNERGYSFVTTAEREIVRDIKEKLCYVALDFENEMATAASSSSLEKRYELPDGQVITIGNERFCCPETLFQPSFMGMESAGIHEITHSSIMKCDIEIRKDLYANNVLTGGATLFPGIADRMQKEITALAPSTMKIQIIAPPERKYSVWIGGSILASLSTFQQMWISKQEYEEIGPSIIHCKCF</sequence>
<evidence type="ECO:0000250" key="1"/>
<evidence type="ECO:0000250" key="2">
    <source>
        <dbReference type="UniProtKB" id="P68137"/>
    </source>
</evidence>
<evidence type="ECO:0000269" key="3">
    <source>
    </source>
</evidence>
<evidence type="ECO:0000305" key="4"/>
<accession>P53483</accession>
<comment type="function">
    <text>Actins are highly conserved proteins that are involved in various types of cell motility and are ubiquitously expressed in all eukaryotic cells.</text>
</comment>
<comment type="catalytic activity">
    <reaction evidence="2">
        <text>ATP + H2O = ADP + phosphate + H(+)</text>
        <dbReference type="Rhea" id="RHEA:13065"/>
        <dbReference type="ChEBI" id="CHEBI:15377"/>
        <dbReference type="ChEBI" id="CHEBI:15378"/>
        <dbReference type="ChEBI" id="CHEBI:30616"/>
        <dbReference type="ChEBI" id="CHEBI:43474"/>
        <dbReference type="ChEBI" id="CHEBI:456216"/>
    </reaction>
</comment>
<comment type="subunit">
    <text>Polymerization of globular actin (G-actin) leads to a structural filament (F-actin) in the form of a two-stranded helix. Each actin can bind to 4 others.</text>
</comment>
<comment type="subcellular location">
    <subcellularLocation>
        <location>Cytoplasm</location>
        <location>Cytoskeleton</location>
    </subcellularLocation>
</comment>
<comment type="tissue specificity">
    <text evidence="3">Predominantly expressed in testis.</text>
</comment>
<comment type="PTM">
    <text evidence="1">Oxidation of Met-45 and Met-48 by MICALs (mical1, mical2 or mical3) to form methionine sulfoxide promotes actin filament depolymerization. Mical1 and mical2 produce the (R)-S-oxide form. The (R)-S-oxide form is reverted by msrb1 and msrb2, which promote actin repolymerization (By similarity).</text>
</comment>
<comment type="similarity">
    <text evidence="4">Belongs to the actin family.</text>
</comment>
<proteinExistence type="evidence at transcript level"/>